<evidence type="ECO:0000255" key="1">
    <source>
        <dbReference type="HAMAP-Rule" id="MF_00014"/>
    </source>
</evidence>
<name>RIMM_CLOAB</name>
<protein>
    <recommendedName>
        <fullName evidence="1">Ribosome maturation factor RimM</fullName>
    </recommendedName>
</protein>
<comment type="function">
    <text evidence="1">An accessory protein needed during the final step in the assembly of 30S ribosomal subunit, possibly for assembly of the head region. Essential for efficient processing of 16S rRNA. May be needed both before and after RbfA during the maturation of 16S rRNA. It has affinity for free ribosomal 30S subunits but not for 70S ribosomes.</text>
</comment>
<comment type="subunit">
    <text evidence="1">Binds ribosomal protein uS19.</text>
</comment>
<comment type="subcellular location">
    <subcellularLocation>
        <location evidence="1">Cytoplasm</location>
    </subcellularLocation>
</comment>
<comment type="domain">
    <text evidence="1">The PRC barrel domain binds ribosomal protein uS19.</text>
</comment>
<comment type="similarity">
    <text evidence="1">Belongs to the RimM family.</text>
</comment>
<organism>
    <name type="scientific">Clostridium acetobutylicum (strain ATCC 824 / DSM 792 / JCM 1419 / IAM 19013 / LMG 5710 / NBRC 13948 / NRRL B-527 / VKM B-1787 / 2291 / W)</name>
    <dbReference type="NCBI Taxonomy" id="272562"/>
    <lineage>
        <taxon>Bacteria</taxon>
        <taxon>Bacillati</taxon>
        <taxon>Bacillota</taxon>
        <taxon>Clostridia</taxon>
        <taxon>Eubacteriales</taxon>
        <taxon>Clostridiaceae</taxon>
        <taxon>Clostridium</taxon>
    </lineage>
</organism>
<gene>
    <name evidence="1" type="primary">rimM</name>
    <name type="ordered locus">CA_C1757</name>
</gene>
<accession>Q97I95</accession>
<sequence>MEDFFSIGQIINTHGVRGELKIYPLTDDINRFDDLDSVYVDNEIKKVISVKKQPNKLILKLEGIDTLDEAVKYKNKYIKVLREDAVELKEGQYFIKDIIGCNVFDENDKDLGEVYDVISTKNNDVYCIRKEGQQDILVPALKDIVLKIEIENKKIVIKAVEEWLES</sequence>
<feature type="chain" id="PRO_0000163277" description="Ribosome maturation factor RimM">
    <location>
        <begin position="1"/>
        <end position="166"/>
    </location>
</feature>
<feature type="domain" description="PRC barrel" evidence="1">
    <location>
        <begin position="90"/>
        <end position="163"/>
    </location>
</feature>
<dbReference type="EMBL" id="AE001437">
    <property type="protein sequence ID" value="AAK79723.1"/>
    <property type="molecule type" value="Genomic_DNA"/>
</dbReference>
<dbReference type="PIR" id="H97116">
    <property type="entry name" value="H97116"/>
</dbReference>
<dbReference type="RefSeq" id="NP_348383.1">
    <property type="nucleotide sequence ID" value="NC_003030.1"/>
</dbReference>
<dbReference type="RefSeq" id="WP_010965064.1">
    <property type="nucleotide sequence ID" value="NC_003030.1"/>
</dbReference>
<dbReference type="SMR" id="Q97I95"/>
<dbReference type="STRING" id="272562.CA_C1757"/>
<dbReference type="GeneID" id="44998252"/>
<dbReference type="KEGG" id="cac:CA_C1757"/>
<dbReference type="PATRIC" id="fig|272562.8.peg.1961"/>
<dbReference type="eggNOG" id="COG0806">
    <property type="taxonomic scope" value="Bacteria"/>
</dbReference>
<dbReference type="HOGENOM" id="CLU_077636_3_2_9"/>
<dbReference type="OrthoDB" id="9810331at2"/>
<dbReference type="Proteomes" id="UP000000814">
    <property type="component" value="Chromosome"/>
</dbReference>
<dbReference type="GO" id="GO:0005737">
    <property type="term" value="C:cytoplasm"/>
    <property type="evidence" value="ECO:0007669"/>
    <property type="project" value="UniProtKB-SubCell"/>
</dbReference>
<dbReference type="GO" id="GO:0005840">
    <property type="term" value="C:ribosome"/>
    <property type="evidence" value="ECO:0007669"/>
    <property type="project" value="InterPro"/>
</dbReference>
<dbReference type="GO" id="GO:0043022">
    <property type="term" value="F:ribosome binding"/>
    <property type="evidence" value="ECO:0007669"/>
    <property type="project" value="InterPro"/>
</dbReference>
<dbReference type="GO" id="GO:0042274">
    <property type="term" value="P:ribosomal small subunit biogenesis"/>
    <property type="evidence" value="ECO:0007669"/>
    <property type="project" value="UniProtKB-UniRule"/>
</dbReference>
<dbReference type="GO" id="GO:0006364">
    <property type="term" value="P:rRNA processing"/>
    <property type="evidence" value="ECO:0007669"/>
    <property type="project" value="UniProtKB-UniRule"/>
</dbReference>
<dbReference type="Gene3D" id="2.30.30.240">
    <property type="entry name" value="PRC-barrel domain"/>
    <property type="match status" value="1"/>
</dbReference>
<dbReference type="Gene3D" id="2.40.30.60">
    <property type="entry name" value="RimM"/>
    <property type="match status" value="1"/>
</dbReference>
<dbReference type="HAMAP" id="MF_00014">
    <property type="entry name" value="Ribosome_mat_RimM"/>
    <property type="match status" value="1"/>
</dbReference>
<dbReference type="InterPro" id="IPR027275">
    <property type="entry name" value="PRC-brl_dom"/>
</dbReference>
<dbReference type="InterPro" id="IPR011033">
    <property type="entry name" value="PRC_barrel-like_sf"/>
</dbReference>
<dbReference type="InterPro" id="IPR011961">
    <property type="entry name" value="RimM"/>
</dbReference>
<dbReference type="InterPro" id="IPR002676">
    <property type="entry name" value="RimM_N"/>
</dbReference>
<dbReference type="InterPro" id="IPR036976">
    <property type="entry name" value="RimM_N_sf"/>
</dbReference>
<dbReference type="InterPro" id="IPR009000">
    <property type="entry name" value="Transl_B-barrel_sf"/>
</dbReference>
<dbReference type="NCBIfam" id="TIGR02273">
    <property type="entry name" value="16S_RimM"/>
    <property type="match status" value="1"/>
</dbReference>
<dbReference type="PANTHER" id="PTHR33692">
    <property type="entry name" value="RIBOSOME MATURATION FACTOR RIMM"/>
    <property type="match status" value="1"/>
</dbReference>
<dbReference type="PANTHER" id="PTHR33692:SF1">
    <property type="entry name" value="RIBOSOME MATURATION FACTOR RIMM"/>
    <property type="match status" value="1"/>
</dbReference>
<dbReference type="Pfam" id="PF05239">
    <property type="entry name" value="PRC"/>
    <property type="match status" value="1"/>
</dbReference>
<dbReference type="Pfam" id="PF01782">
    <property type="entry name" value="RimM"/>
    <property type="match status" value="1"/>
</dbReference>
<dbReference type="SUPFAM" id="SSF50346">
    <property type="entry name" value="PRC-barrel domain"/>
    <property type="match status" value="1"/>
</dbReference>
<dbReference type="SUPFAM" id="SSF50447">
    <property type="entry name" value="Translation proteins"/>
    <property type="match status" value="1"/>
</dbReference>
<reference key="1">
    <citation type="journal article" date="2001" name="J. Bacteriol.">
        <title>Genome sequence and comparative analysis of the solvent-producing bacterium Clostridium acetobutylicum.</title>
        <authorList>
            <person name="Noelling J."/>
            <person name="Breton G."/>
            <person name="Omelchenko M.V."/>
            <person name="Makarova K.S."/>
            <person name="Zeng Q."/>
            <person name="Gibson R."/>
            <person name="Lee H.M."/>
            <person name="Dubois J."/>
            <person name="Qiu D."/>
            <person name="Hitti J."/>
            <person name="Wolf Y.I."/>
            <person name="Tatusov R.L."/>
            <person name="Sabathe F."/>
            <person name="Doucette-Stamm L.A."/>
            <person name="Soucaille P."/>
            <person name="Daly M.J."/>
            <person name="Bennett G.N."/>
            <person name="Koonin E.V."/>
            <person name="Smith D.R."/>
        </authorList>
    </citation>
    <scope>NUCLEOTIDE SEQUENCE [LARGE SCALE GENOMIC DNA]</scope>
    <source>
        <strain>ATCC 824 / DSM 792 / JCM 1419 / IAM 19013 / LMG 5710 / NBRC 13948 / NRRL B-527 / VKM B-1787 / 2291 / W</strain>
    </source>
</reference>
<proteinExistence type="inferred from homology"/>
<keyword id="KW-0143">Chaperone</keyword>
<keyword id="KW-0963">Cytoplasm</keyword>
<keyword id="KW-1185">Reference proteome</keyword>
<keyword id="KW-0690">Ribosome biogenesis</keyword>
<keyword id="KW-0698">rRNA processing</keyword>